<dbReference type="EMBL" id="AF349455">
    <property type="protein sequence ID" value="AAL57767.1"/>
    <property type="molecule type" value="mRNA"/>
</dbReference>
<dbReference type="EMBL" id="AF151894">
    <property type="protein sequence ID" value="AAD34131.1"/>
    <property type="molecule type" value="mRNA"/>
</dbReference>
<dbReference type="EMBL" id="AK026514">
    <property type="protein sequence ID" value="BAB15494.1"/>
    <property type="molecule type" value="mRNA"/>
</dbReference>
<dbReference type="EMBL" id="CR457362">
    <property type="protein sequence ID" value="CAG33643.1"/>
    <property type="molecule type" value="mRNA"/>
</dbReference>
<dbReference type="EMBL" id="BC005024">
    <property type="protein sequence ID" value="AAH05024.1"/>
    <property type="molecule type" value="mRNA"/>
</dbReference>
<dbReference type="CCDS" id="CCDS10512.1"/>
<dbReference type="RefSeq" id="NP_057153.8">
    <property type="nucleotide sequence ID" value="NM_016069.9"/>
</dbReference>
<dbReference type="SMR" id="Q9Y3D7"/>
<dbReference type="BioGRID" id="119231">
    <property type="interactions" value="121"/>
</dbReference>
<dbReference type="ComplexPortal" id="CPX-6129">
    <property type="entry name" value="TIM23 mitochondrial inner membrane pre-sequence translocase complex, TIM17A variant"/>
</dbReference>
<dbReference type="ComplexPortal" id="CPX-6130">
    <property type="entry name" value="TIM23 mitochondrial inner membrane pre-sequence translocase complex, TIM17B variant"/>
</dbReference>
<dbReference type="CORUM" id="Q9Y3D7"/>
<dbReference type="FunCoup" id="Q9Y3D7">
    <property type="interactions" value="986"/>
</dbReference>
<dbReference type="IntAct" id="Q9Y3D7">
    <property type="interactions" value="27"/>
</dbReference>
<dbReference type="MINT" id="Q9Y3D7"/>
<dbReference type="STRING" id="9606.ENSP00000315693"/>
<dbReference type="GlyGen" id="Q9Y3D7">
    <property type="glycosylation" value="1 site, 1 O-linked glycan (1 site)"/>
</dbReference>
<dbReference type="iPTMnet" id="Q9Y3D7"/>
<dbReference type="PhosphoSitePlus" id="Q9Y3D7"/>
<dbReference type="BioMuta" id="PAM16"/>
<dbReference type="DMDM" id="23503082"/>
<dbReference type="jPOST" id="Q9Y3D7"/>
<dbReference type="MassIVE" id="Q9Y3D7"/>
<dbReference type="PaxDb" id="9606-ENSP00000315693"/>
<dbReference type="PeptideAtlas" id="Q9Y3D7"/>
<dbReference type="ProteomicsDB" id="86023"/>
<dbReference type="Pumba" id="Q9Y3D7"/>
<dbReference type="TopDownProteomics" id="Q9Y3D7"/>
<dbReference type="Antibodypedia" id="56377">
    <property type="antibodies" value="90 antibodies from 16 providers"/>
</dbReference>
<dbReference type="DNASU" id="51025"/>
<dbReference type="Ensembl" id="ENST00000318059.8">
    <property type="protein sequence ID" value="ENSP00000315693.3"/>
    <property type="gene ID" value="ENSG00000217930.8"/>
</dbReference>
<dbReference type="Ensembl" id="ENST00000576217.1">
    <property type="protein sequence ID" value="ENSP00000461047.1"/>
    <property type="gene ID" value="ENSG00000217930.8"/>
</dbReference>
<dbReference type="Ensembl" id="ENST00000616009.2">
    <property type="protein sequence ID" value="ENSP00000484240.1"/>
    <property type="gene ID" value="ENSG00000282228.1"/>
</dbReference>
<dbReference type="Ensembl" id="ENST00000634045.1">
    <property type="protein sequence ID" value="ENSP00000487678.1"/>
    <property type="gene ID" value="ENSG00000282228.1"/>
</dbReference>
<dbReference type="GeneID" id="51025"/>
<dbReference type="KEGG" id="hsa:51025"/>
<dbReference type="MANE-Select" id="ENST00000318059.8">
    <property type="protein sequence ID" value="ENSP00000315693.3"/>
    <property type="RefSeq nucleotide sequence ID" value="NM_016069.11"/>
    <property type="RefSeq protein sequence ID" value="NP_057153.8"/>
</dbReference>
<dbReference type="UCSC" id="uc002cwd.4">
    <property type="organism name" value="human"/>
</dbReference>
<dbReference type="AGR" id="HGNC:29679"/>
<dbReference type="CTD" id="51025"/>
<dbReference type="DisGeNET" id="51025"/>
<dbReference type="GeneCards" id="PAM16"/>
<dbReference type="HGNC" id="HGNC:29679">
    <property type="gene designation" value="PAM16"/>
</dbReference>
<dbReference type="HPA" id="ENSG00000217930">
    <property type="expression patterns" value="Tissue enhanced (skeletal)"/>
</dbReference>
<dbReference type="MalaCards" id="PAM16"/>
<dbReference type="MIM" id="613320">
    <property type="type" value="phenotype"/>
</dbReference>
<dbReference type="MIM" id="614336">
    <property type="type" value="gene"/>
</dbReference>
<dbReference type="neXtProt" id="NX_Q9Y3D7"/>
<dbReference type="OpenTargets" id="ENSG00000217930"/>
<dbReference type="Orphanet" id="401979">
    <property type="disease" value="Autosomal recessive spondylometaphyseal dysplasia, Megarbane type"/>
</dbReference>
<dbReference type="VEuPathDB" id="HostDB:ENSG00000217930"/>
<dbReference type="eggNOG" id="KOG3442">
    <property type="taxonomic scope" value="Eukaryota"/>
</dbReference>
<dbReference type="GeneTree" id="ENSGT00390000012037"/>
<dbReference type="HOGENOM" id="CLU_101461_3_0_1"/>
<dbReference type="InParanoid" id="Q9Y3D7"/>
<dbReference type="OMA" id="AKYLIQI"/>
<dbReference type="OrthoDB" id="10262892at2759"/>
<dbReference type="PAN-GO" id="Q9Y3D7">
    <property type="GO annotations" value="2 GO annotations based on evolutionary models"/>
</dbReference>
<dbReference type="PhylomeDB" id="Q9Y3D7"/>
<dbReference type="TreeFam" id="TF315134"/>
<dbReference type="PathwayCommons" id="Q9Y3D7"/>
<dbReference type="Reactome" id="R-HSA-1268020">
    <property type="pathway name" value="Mitochondrial protein import"/>
</dbReference>
<dbReference type="SignaLink" id="Q9Y3D7"/>
<dbReference type="SIGNOR" id="Q9Y3D7"/>
<dbReference type="BioGRID-ORCS" id="51025">
    <property type="hits" value="767 hits in 1107 CRISPR screens"/>
</dbReference>
<dbReference type="CD-CODE" id="FB4E32DD">
    <property type="entry name" value="Presynaptic clusters and postsynaptic densities"/>
</dbReference>
<dbReference type="GenomeRNAi" id="51025"/>
<dbReference type="Pharos" id="Q9Y3D7">
    <property type="development level" value="Tbio"/>
</dbReference>
<dbReference type="PRO" id="PR:Q9Y3D7"/>
<dbReference type="Proteomes" id="UP000005640">
    <property type="component" value="Chromosome 16"/>
</dbReference>
<dbReference type="RNAct" id="Q9Y3D7">
    <property type="molecule type" value="protein"/>
</dbReference>
<dbReference type="Bgee" id="ENSG00000217930">
    <property type="expression patterns" value="Expressed in gastrocnemius and 95 other cell types or tissues"/>
</dbReference>
<dbReference type="ExpressionAtlas" id="Q9Y3D7">
    <property type="expression patterns" value="baseline and differential"/>
</dbReference>
<dbReference type="GO" id="GO:0005743">
    <property type="term" value="C:mitochondrial inner membrane"/>
    <property type="evidence" value="ECO:0000303"/>
    <property type="project" value="ComplexPortal"/>
</dbReference>
<dbReference type="GO" id="GO:0005759">
    <property type="term" value="C:mitochondrial matrix"/>
    <property type="evidence" value="ECO:0000314"/>
    <property type="project" value="GO_Central"/>
</dbReference>
<dbReference type="GO" id="GO:0005739">
    <property type="term" value="C:mitochondrion"/>
    <property type="evidence" value="ECO:0006056"/>
    <property type="project" value="FlyBase"/>
</dbReference>
<dbReference type="GO" id="GO:0001405">
    <property type="term" value="C:PAM complex, Tim23 associated import motor"/>
    <property type="evidence" value="ECO:0000316"/>
    <property type="project" value="GO_Central"/>
</dbReference>
<dbReference type="GO" id="GO:0032991">
    <property type="term" value="C:protein-containing complex"/>
    <property type="evidence" value="ECO:0000314"/>
    <property type="project" value="GO_Central"/>
</dbReference>
<dbReference type="GO" id="GO:0005744">
    <property type="term" value="C:TIM23 mitochondrial import inner membrane translocase complex"/>
    <property type="evidence" value="ECO:0000318"/>
    <property type="project" value="GO_Central"/>
</dbReference>
<dbReference type="GO" id="GO:0006886">
    <property type="term" value="P:intracellular protein transport"/>
    <property type="evidence" value="ECO:0000303"/>
    <property type="project" value="ComplexPortal"/>
</dbReference>
<dbReference type="GO" id="GO:0032780">
    <property type="term" value="P:negative regulation of ATP-dependent activity"/>
    <property type="evidence" value="ECO:0000314"/>
    <property type="project" value="GO_Central"/>
</dbReference>
<dbReference type="GO" id="GO:0001503">
    <property type="term" value="P:ossification"/>
    <property type="evidence" value="ECO:0000315"/>
    <property type="project" value="UniProtKB"/>
</dbReference>
<dbReference type="GO" id="GO:0030150">
    <property type="term" value="P:protein import into mitochondrial matrix"/>
    <property type="evidence" value="ECO:0000316"/>
    <property type="project" value="GO_Central"/>
</dbReference>
<dbReference type="FunFam" id="1.10.287.110:FF:000006">
    <property type="entry name" value="Import inner membrane translocase subunit TIM16"/>
    <property type="match status" value="1"/>
</dbReference>
<dbReference type="Gene3D" id="1.10.287.110">
    <property type="entry name" value="DnaJ domain"/>
    <property type="match status" value="1"/>
</dbReference>
<dbReference type="InterPro" id="IPR036869">
    <property type="entry name" value="J_dom_sf"/>
</dbReference>
<dbReference type="InterPro" id="IPR005341">
    <property type="entry name" value="Tim16"/>
</dbReference>
<dbReference type="PANTHER" id="PTHR12388">
    <property type="entry name" value="MITOCHONDRIA ASSOCIATED GRANULOCYTE MACROPHAGE CSF SIGNALING MOLECULE"/>
    <property type="match status" value="1"/>
</dbReference>
<dbReference type="PANTHER" id="PTHR12388:SF0">
    <property type="entry name" value="MITOCHONDRIAL IMPORT INNER MEMBRANE TRANSLOCASE SUBUNIT TIM16"/>
    <property type="match status" value="1"/>
</dbReference>
<dbReference type="Pfam" id="PF03656">
    <property type="entry name" value="Pam16"/>
    <property type="match status" value="1"/>
</dbReference>
<accession>Q9Y3D7</accession>
<accession>Q6I9Z3</accession>
<accession>Q9H5X3</accession>
<comment type="function">
    <text evidence="5">Regulates ATP-dependent protein translocation into the mitochondrial matrix. Inhibits DNAJC19 stimulation of HSPA9/Mortalin ATPase activity.</text>
</comment>
<comment type="subunit">
    <text evidence="1 2 5 6">Probable component of the PAM complex at least composed of a mitochondrial HSP70 protein, GRPEL1 or GRPEL2, TIMM44, TIMM16/PAM16 and TIMM14/DNAJC19 (By similarity). Interacts with DNAJC19. Directly interacts with DNAJC15; this interaction counteracts DNAJC15-dependent stimulation of HSPA9 ATPase activity. Associates with the TIM23 complex. Associates with the TIM23 complex (By similarity).</text>
</comment>
<comment type="interaction">
    <interactant intactId="EBI-721147">
        <id>Q9Y3D7</id>
    </interactant>
    <interactant intactId="EBI-714543">
        <id>Q15041</id>
        <label>ARL6IP1</label>
    </interactant>
    <organismsDiffer>false</organismsDiffer>
    <experiments>3</experiments>
</comment>
<comment type="interaction">
    <interactant intactId="EBI-721147">
        <id>Q9Y3D7</id>
    </interactant>
    <interactant intactId="EBI-10329228">
        <id>Q9Y5T4</id>
        <label>DNAJC15</label>
    </interactant>
    <organismsDiffer>false</organismsDiffer>
    <experiments>6</experiments>
</comment>
<comment type="interaction">
    <interactant intactId="EBI-721147">
        <id>Q9Y3D7</id>
    </interactant>
    <interactant intactId="EBI-16439278">
        <id>Q6FHY5</id>
        <label>MEOX2</label>
    </interactant>
    <organismsDiffer>false</organismsDiffer>
    <experiments>3</experiments>
</comment>
<comment type="subcellular location">
    <subcellularLocation>
        <location evidence="3 5">Mitochondrion inner membrane</location>
        <topology evidence="3 5">Peripheral membrane protein</topology>
        <orientation evidence="3 5">Matrix side</orientation>
    </subcellularLocation>
</comment>
<comment type="tissue specificity">
    <text evidence="4">Ubiquitously expressed.</text>
</comment>
<comment type="induction">
    <text>By CSF2/GM-CSF.</text>
</comment>
<comment type="domain">
    <text evidence="1">The J-like region, although related to the J domain does not have co-chaperone activity.</text>
</comment>
<comment type="disease" evidence="7">
    <disease id="DI-04374">
        <name>Spondylometaphyseal dysplasia, Megarbane-Dagher-Melike type</name>
        <acronym>SMDMDM</acronym>
        <description>An autosomal recessive disease characterized by pre- and postnatal short stature, developmental delay, dysmorphic facial appearance, narrow chest, prominent abdomen, platyspondyly, and short limbs.</description>
        <dbReference type="MIM" id="613320"/>
    </disease>
    <text>The disease is caused by variants affecting the gene represented in this entry.</text>
</comment>
<comment type="similarity">
    <text evidence="8">Belongs to the TIM16/PAM16 family.</text>
</comment>
<feature type="chain" id="PRO_0000214078" description="Mitochondrial import inner membrane translocase subunit TIM16">
    <location>
        <begin position="1"/>
        <end position="125"/>
    </location>
</feature>
<feature type="region of interest" description="J-like">
    <location>
        <begin position="58"/>
        <end position="110"/>
    </location>
</feature>
<feature type="modified residue" description="Phosphoserine" evidence="2">
    <location>
        <position position="69"/>
    </location>
</feature>
<feature type="sequence variant" id="VAR_073419" description="In SMDMDM; dbSNP:rs786203989." evidence="7">
    <original>N</original>
    <variation>D</variation>
    <location>
        <position position="76"/>
    </location>
</feature>
<feature type="sequence variant" id="VAR_013764" description="In dbSNP:rs11989." evidence="3">
    <original>Q</original>
    <variation>K</variation>
    <location>
        <position position="114"/>
    </location>
</feature>
<feature type="mutagenesis site" description="Substantial loss of protein translocation into mitochondria in a heterologous system." evidence="5">
    <original>I</original>
    <variation>A</variation>
    <variation>Q</variation>
    <variation>W</variation>
    <location>
        <position position="62"/>
    </location>
</feature>
<feature type="mutagenesis site" description="No effect on protein translocation into mitochondria in a heterologous system." evidence="5">
    <original>DKS</original>
    <variation>HPD</variation>
    <location>
        <begin position="85"/>
        <end position="87"/>
    </location>
</feature>
<feature type="mutagenesis site" description="Partial loss of protein translocation into mitochondria in a heterologous system. Substantial loss of protein translocation into mitochondria in a heterologous system; when associated with G-93. Partial loss of DNAJC19-binding. Loss of DNAJC19-binding; when associated with G-93. Partial loss of inhibition of DNAJC19 stimulation of HSPA9 ATPase activity. Complete loss of inhibition of DNAJC19 stimulation of HSPA9 ATPase activity; when associated with G-93." evidence="5">
    <original>F</original>
    <variation>G</variation>
    <location>
        <position position="92"/>
    </location>
</feature>
<feature type="mutagenesis site" description="Partial loss of protein translocation into mitochondria in a heterologous system. Substantial loss of protein translocation into mitochondria in a heterologous system; when associated with G-92. Loss of DNAJC19-binding; when associated with G-92. Complete loss of inhibition of DNAJC19 stimulation of HSPA9 ATPase activity; when associated with G-92." evidence="5">
    <original>Y</original>
    <variation>G</variation>
    <location>
        <position position="93"/>
    </location>
</feature>
<feature type="mutagenesis site" description="No effect on protein translocation into mitochondria in a heterologous system." evidence="5">
    <original>L</original>
    <variation>A</variation>
    <location>
        <position position="94"/>
    </location>
</feature>
<feature type="mutagenesis site" description="Substantial loss of protein translocation into mitochondria in a heterologous system. Substantial loss of DNAJC19-binding. Partial loss of inhibition of DNAJC19 stimulation of HSPA9 ATPase activity." evidence="5">
    <original>L</original>
    <variation>Q</variation>
    <location>
        <position position="94"/>
    </location>
</feature>
<feature type="sequence conflict" description="In Ref. 2; AAD34131." evidence="8" ref="2">
    <original>G</original>
    <variation>W</variation>
    <location>
        <position position="120"/>
    </location>
</feature>
<evidence type="ECO:0000250" key="1"/>
<evidence type="ECO:0000250" key="2">
    <source>
        <dbReference type="UniProtKB" id="Q9CQV1"/>
    </source>
</evidence>
<evidence type="ECO:0000269" key="3">
    <source>
    </source>
</evidence>
<evidence type="ECO:0000269" key="4">
    <source>
    </source>
</evidence>
<evidence type="ECO:0000269" key="5">
    <source>
    </source>
</evidence>
<evidence type="ECO:0000269" key="6">
    <source>
    </source>
</evidence>
<evidence type="ECO:0000269" key="7">
    <source>
    </source>
</evidence>
<evidence type="ECO:0000305" key="8"/>
<gene>
    <name type="primary">PAM16</name>
    <name type="synonym">MAGMAS</name>
    <name type="synonym">TIM16</name>
    <name type="synonym">TIMM16</name>
    <name type="ORF">CGI-136</name>
</gene>
<reference key="1">
    <citation type="journal article" date="2001" name="Exp. Hematol.">
        <title>Identification and characterization of Magmas, a novel mitochondria-associated protein involved in granulocyte-macrophage colony-stimulating factor signal transduction.</title>
        <authorList>
            <person name="Jubinsky P.T."/>
            <person name="Messer A."/>
            <person name="Bender J."/>
            <person name="Morris R.E."/>
            <person name="Ciraolo G.M."/>
            <person name="Witte D.P."/>
            <person name="Hawley R.G."/>
            <person name="Short M.K."/>
        </authorList>
    </citation>
    <scope>NUCLEOTIDE SEQUENCE [MRNA]</scope>
    <scope>SUBCELLULAR LOCATION</scope>
    <scope>VARIANT LYS-114</scope>
    <source>
        <tissue>Peripheral blood</tissue>
    </source>
</reference>
<reference key="2">
    <citation type="journal article" date="2000" name="Genome Res.">
        <title>Identification of novel human genes evolutionarily conserved in Caenorhabditis elegans by comparative proteomics.</title>
        <authorList>
            <person name="Lai C.-H."/>
            <person name="Chou C.-Y."/>
            <person name="Ch'ang L.-Y."/>
            <person name="Liu C.-S."/>
            <person name="Lin W.-C."/>
        </authorList>
    </citation>
    <scope>NUCLEOTIDE SEQUENCE [LARGE SCALE MRNA]</scope>
</reference>
<reference key="3">
    <citation type="journal article" date="2004" name="Nat. Genet.">
        <title>Complete sequencing and characterization of 21,243 full-length human cDNAs.</title>
        <authorList>
            <person name="Ota T."/>
            <person name="Suzuki Y."/>
            <person name="Nishikawa T."/>
            <person name="Otsuki T."/>
            <person name="Sugiyama T."/>
            <person name="Irie R."/>
            <person name="Wakamatsu A."/>
            <person name="Hayashi K."/>
            <person name="Sato H."/>
            <person name="Nagai K."/>
            <person name="Kimura K."/>
            <person name="Makita H."/>
            <person name="Sekine M."/>
            <person name="Obayashi M."/>
            <person name="Nishi T."/>
            <person name="Shibahara T."/>
            <person name="Tanaka T."/>
            <person name="Ishii S."/>
            <person name="Yamamoto J."/>
            <person name="Saito K."/>
            <person name="Kawai Y."/>
            <person name="Isono Y."/>
            <person name="Nakamura Y."/>
            <person name="Nagahari K."/>
            <person name="Murakami K."/>
            <person name="Yasuda T."/>
            <person name="Iwayanagi T."/>
            <person name="Wagatsuma M."/>
            <person name="Shiratori A."/>
            <person name="Sudo H."/>
            <person name="Hosoiri T."/>
            <person name="Kaku Y."/>
            <person name="Kodaira H."/>
            <person name="Kondo H."/>
            <person name="Sugawara M."/>
            <person name="Takahashi M."/>
            <person name="Kanda K."/>
            <person name="Yokoi T."/>
            <person name="Furuya T."/>
            <person name="Kikkawa E."/>
            <person name="Omura Y."/>
            <person name="Abe K."/>
            <person name="Kamihara K."/>
            <person name="Katsuta N."/>
            <person name="Sato K."/>
            <person name="Tanikawa M."/>
            <person name="Yamazaki M."/>
            <person name="Ninomiya K."/>
            <person name="Ishibashi T."/>
            <person name="Yamashita H."/>
            <person name="Murakawa K."/>
            <person name="Fujimori K."/>
            <person name="Tanai H."/>
            <person name="Kimata M."/>
            <person name="Watanabe M."/>
            <person name="Hiraoka S."/>
            <person name="Chiba Y."/>
            <person name="Ishida S."/>
            <person name="Ono Y."/>
            <person name="Takiguchi S."/>
            <person name="Watanabe S."/>
            <person name="Yosida M."/>
            <person name="Hotuta T."/>
            <person name="Kusano J."/>
            <person name="Kanehori K."/>
            <person name="Takahashi-Fujii A."/>
            <person name="Hara H."/>
            <person name="Tanase T.-O."/>
            <person name="Nomura Y."/>
            <person name="Togiya S."/>
            <person name="Komai F."/>
            <person name="Hara R."/>
            <person name="Takeuchi K."/>
            <person name="Arita M."/>
            <person name="Imose N."/>
            <person name="Musashino K."/>
            <person name="Yuuki H."/>
            <person name="Oshima A."/>
            <person name="Sasaki N."/>
            <person name="Aotsuka S."/>
            <person name="Yoshikawa Y."/>
            <person name="Matsunawa H."/>
            <person name="Ichihara T."/>
            <person name="Shiohata N."/>
            <person name="Sano S."/>
            <person name="Moriya S."/>
            <person name="Momiyama H."/>
            <person name="Satoh N."/>
            <person name="Takami S."/>
            <person name="Terashima Y."/>
            <person name="Suzuki O."/>
            <person name="Nakagawa S."/>
            <person name="Senoh A."/>
            <person name="Mizoguchi H."/>
            <person name="Goto Y."/>
            <person name="Shimizu F."/>
            <person name="Wakebe H."/>
            <person name="Hishigaki H."/>
            <person name="Watanabe T."/>
            <person name="Sugiyama A."/>
            <person name="Takemoto M."/>
            <person name="Kawakami B."/>
            <person name="Yamazaki M."/>
            <person name="Watanabe K."/>
            <person name="Kumagai A."/>
            <person name="Itakura S."/>
            <person name="Fukuzumi Y."/>
            <person name="Fujimori Y."/>
            <person name="Komiyama M."/>
            <person name="Tashiro H."/>
            <person name="Tanigami A."/>
            <person name="Fujiwara T."/>
            <person name="Ono T."/>
            <person name="Yamada K."/>
            <person name="Fujii Y."/>
            <person name="Ozaki K."/>
            <person name="Hirao M."/>
            <person name="Ohmori Y."/>
            <person name="Kawabata A."/>
            <person name="Hikiji T."/>
            <person name="Kobatake N."/>
            <person name="Inagaki H."/>
            <person name="Ikema Y."/>
            <person name="Okamoto S."/>
            <person name="Okitani R."/>
            <person name="Kawakami T."/>
            <person name="Noguchi S."/>
            <person name="Itoh T."/>
            <person name="Shigeta K."/>
            <person name="Senba T."/>
            <person name="Matsumura K."/>
            <person name="Nakajima Y."/>
            <person name="Mizuno T."/>
            <person name="Morinaga M."/>
            <person name="Sasaki M."/>
            <person name="Togashi T."/>
            <person name="Oyama M."/>
            <person name="Hata H."/>
            <person name="Watanabe M."/>
            <person name="Komatsu T."/>
            <person name="Mizushima-Sugano J."/>
            <person name="Satoh T."/>
            <person name="Shirai Y."/>
            <person name="Takahashi Y."/>
            <person name="Nakagawa K."/>
            <person name="Okumura K."/>
            <person name="Nagase T."/>
            <person name="Nomura N."/>
            <person name="Kikuchi H."/>
            <person name="Masuho Y."/>
            <person name="Yamashita R."/>
            <person name="Nakai K."/>
            <person name="Yada T."/>
            <person name="Nakamura Y."/>
            <person name="Ohara O."/>
            <person name="Isogai T."/>
            <person name="Sugano S."/>
        </authorList>
    </citation>
    <scope>NUCLEOTIDE SEQUENCE [LARGE SCALE MRNA]</scope>
</reference>
<reference key="4">
    <citation type="submission" date="2004-06" db="EMBL/GenBank/DDBJ databases">
        <title>Cloning of human full open reading frames in Gateway(TM) system entry vector (pDONR201).</title>
        <authorList>
            <person name="Ebert L."/>
            <person name="Schick M."/>
            <person name="Neubert P."/>
            <person name="Schatten R."/>
            <person name="Henze S."/>
            <person name="Korn B."/>
        </authorList>
    </citation>
    <scope>NUCLEOTIDE SEQUENCE [LARGE SCALE MRNA]</scope>
</reference>
<reference key="5">
    <citation type="journal article" date="2004" name="Genome Res.">
        <title>The status, quality, and expansion of the NIH full-length cDNA project: the Mammalian Gene Collection (MGC).</title>
        <authorList>
            <consortium name="The MGC Project Team"/>
        </authorList>
    </citation>
    <scope>NUCLEOTIDE SEQUENCE [LARGE SCALE MRNA]</scope>
    <source>
        <tissue>Skin</tissue>
    </source>
</reference>
<reference key="6">
    <citation type="journal article" date="2005" name="J. Mol. Histol.">
        <title>Magmas expression in neoplastic human prostate.</title>
        <authorList>
            <person name="Jubinsky P.T."/>
            <person name="Short M.K."/>
            <person name="Mutema G."/>
            <person name="Morris R.E."/>
            <person name="Ciraolo G.M."/>
            <person name="Li M."/>
        </authorList>
    </citation>
    <scope>TISSUE SPECIFICITY</scope>
</reference>
<reference key="7">
    <citation type="journal article" date="2010" name="Hum. Mol. Genet.">
        <title>Role of Magmas in protein transport and human mitochondria biogenesis.</title>
        <authorList>
            <person name="Sinha D."/>
            <person name="Joshi N."/>
            <person name="Chittoor B."/>
            <person name="Samji P."/>
            <person name="D'Silva P."/>
        </authorList>
    </citation>
    <scope>FUNCTION</scope>
    <scope>INTERACTION WITH DNAJC19</scope>
    <scope>ASSOCIATION WITH THE TIM23 COMPLEX</scope>
    <scope>SUBCELLULAR LOCATION</scope>
    <scope>MUTAGENESIS OF ILE-62; 85-ASP--SER-87; PHE-92; TYR-93 AND LEU-94</scope>
</reference>
<reference key="8">
    <citation type="journal article" date="2013" name="Hum. Mol. Genet.">
        <title>Methylation-controlled J-protein MCJ acts in the import of proteins into human mitochondria.</title>
        <authorList>
            <person name="Schusdziarra C."/>
            <person name="Blamowska M."/>
            <person name="Azem A."/>
            <person name="Hell K."/>
        </authorList>
    </citation>
    <scope>INTERACTION WITH DNAJC15</scope>
</reference>
<reference key="9">
    <citation type="journal article" date="2014" name="PLoS Genet.">
        <title>The impairment of MAGMAS function in human is responsible for a severe skeletal dysplasia.</title>
        <authorList>
            <person name="Mehawej C."/>
            <person name="Delahodde A."/>
            <person name="Legeai-Mallet L."/>
            <person name="Delague V."/>
            <person name="Kaci N."/>
            <person name="Desvignes J.P."/>
            <person name="Kibar Z."/>
            <person name="Capo-Chichi J.M."/>
            <person name="Chouery E."/>
            <person name="Munnich A."/>
            <person name="Cormier-Daire V."/>
            <person name="Megarbane A."/>
        </authorList>
    </citation>
    <scope>INVOLVEMENT IN SMDMDM</scope>
    <scope>VARIANT SMDMDM ASP-76</scope>
</reference>
<proteinExistence type="evidence at protein level"/>
<organism>
    <name type="scientific">Homo sapiens</name>
    <name type="common">Human</name>
    <dbReference type="NCBI Taxonomy" id="9606"/>
    <lineage>
        <taxon>Eukaryota</taxon>
        <taxon>Metazoa</taxon>
        <taxon>Chordata</taxon>
        <taxon>Craniata</taxon>
        <taxon>Vertebrata</taxon>
        <taxon>Euteleostomi</taxon>
        <taxon>Mammalia</taxon>
        <taxon>Eutheria</taxon>
        <taxon>Euarchontoglires</taxon>
        <taxon>Primates</taxon>
        <taxon>Haplorrhini</taxon>
        <taxon>Catarrhini</taxon>
        <taxon>Hominidae</taxon>
        <taxon>Homo</taxon>
    </lineage>
</organism>
<name>TIM16_HUMAN</name>
<keyword id="KW-0225">Disease variant</keyword>
<keyword id="KW-0242">Dwarfism</keyword>
<keyword id="KW-0472">Membrane</keyword>
<keyword id="KW-0496">Mitochondrion</keyword>
<keyword id="KW-0999">Mitochondrion inner membrane</keyword>
<keyword id="KW-0597">Phosphoprotein</keyword>
<keyword id="KW-0653">Protein transport</keyword>
<keyword id="KW-1267">Proteomics identification</keyword>
<keyword id="KW-1185">Reference proteome</keyword>
<keyword id="KW-0811">Translocation</keyword>
<keyword id="KW-0813">Transport</keyword>
<protein>
    <recommendedName>
        <fullName>Mitochondrial import inner membrane translocase subunit TIM16</fullName>
    </recommendedName>
    <alternativeName>
        <fullName>Mitochondria-associated granulocyte macrophage CSF-signaling molecule</fullName>
    </alternativeName>
    <alternativeName>
        <fullName>Presequence translocated-associated motor subunit PAM16</fullName>
    </alternativeName>
</protein>
<sequence>MAKYLAQIIVMGVQVVGRAFARALRQEFAASRAAADARGRAGHRSAAASNLSGLSLQEAQQILNVSKLSPEEVQKNYEHLFKVNDKSVGGSFYLQSKVVRAKERLDEELKIQAQEDREKGQMPHT</sequence>